<comment type="function">
    <text evidence="2">Acts in association with FDM3 and FDM4 for RNA-directed DNA methylation (RdDM).</text>
</comment>
<protein>
    <recommendedName>
        <fullName evidence="3">Factor of DNA methylation 5</fullName>
    </recommendedName>
</protein>
<gene>
    <name evidence="3" type="primary">FDM5</name>
    <name evidence="4" type="ordered locus">At1g80790</name>
    <name evidence="5" type="ORF">F23A5.14</name>
</gene>
<feature type="chain" id="PRO_0000430685" description="Factor of DNA methylation 5">
    <location>
        <begin position="1"/>
        <end position="634"/>
    </location>
</feature>
<feature type="coiled-coil region" evidence="1">
    <location>
        <begin position="254"/>
        <end position="469"/>
    </location>
</feature>
<feature type="sequence conflict" description="In Ref. 4; BAH20228." ref="4">
    <original>M</original>
    <variation>T</variation>
    <location>
        <position position="265"/>
    </location>
</feature>
<sequence>MDNSSDEESEISESEIDVYYEKPYEKLMNGDYKVKVKDTFRCPFCAGKKKQHYKYKELLAHASGVAKGSASRSAKQKANHFALAKYMENELAGDADVPRPQIPSSSTEQSQAVVDDIYVWPWMGIVINPVRRTDNKNVLLDSAYWLKKLARFNPLEVKTLWLDQESVVAVIPQFNSGWSGFKSVTELEKEYEIRGCGRKDWIDKRGDWRSKAYGWCARADDYNSQGSIAEYLSKVGKLRSFSDITKEEIQNKSIVVDDLANKIAMTNEDLNKLQYMNNEKTLSLRRVLIEKDELDRVYKQETKKMQELSREKINRIFREKERLTNELEAKMNNLKIWSKQLDKKQALTELERQKLDEDKKKSDVMNSSLQLASLEQKKTDDRVLRLVDEHKRKKEETLNKILQLEKELDSKQKLQMEIQELKGKLKVMKHEDEDDEGIKKKMKKMKEELEEKCSELQDLEDTNSALMVKERKSNDEIVEARKFLITELRELVSDRNIIRVKRMGELEEKPFMTACRQRCTVEEEAQVQYAMLCSKWQEKVKDSAWQPFKHVGTGDRKKEVVDEEDEEIKKLREEWGEEVKNAVKTALEELNEFNPSGRYSVPELWNSKQGRKATLKEVIDYITQQVKTLKRRRA</sequence>
<organism>
    <name type="scientific">Arabidopsis thaliana</name>
    <name type="common">Mouse-ear cress</name>
    <dbReference type="NCBI Taxonomy" id="3702"/>
    <lineage>
        <taxon>Eukaryota</taxon>
        <taxon>Viridiplantae</taxon>
        <taxon>Streptophyta</taxon>
        <taxon>Embryophyta</taxon>
        <taxon>Tracheophyta</taxon>
        <taxon>Spermatophyta</taxon>
        <taxon>Magnoliopsida</taxon>
        <taxon>eudicotyledons</taxon>
        <taxon>Gunneridae</taxon>
        <taxon>Pentapetalae</taxon>
        <taxon>rosids</taxon>
        <taxon>malvids</taxon>
        <taxon>Brassicales</taxon>
        <taxon>Brassicaceae</taxon>
        <taxon>Camelineae</taxon>
        <taxon>Arabidopsis</taxon>
    </lineage>
</organism>
<dbReference type="EMBL" id="AC011713">
    <property type="protein sequence ID" value="AAF14667.1"/>
    <property type="molecule type" value="Genomic_DNA"/>
</dbReference>
<dbReference type="EMBL" id="CP002684">
    <property type="protein sequence ID" value="AEE36451.1"/>
    <property type="molecule type" value="Genomic_DNA"/>
</dbReference>
<dbReference type="EMBL" id="CP002684">
    <property type="protein sequence ID" value="ANM58618.1"/>
    <property type="molecule type" value="Genomic_DNA"/>
</dbReference>
<dbReference type="EMBL" id="AK227040">
    <property type="protein sequence ID" value="BAE99100.1"/>
    <property type="molecule type" value="mRNA"/>
</dbReference>
<dbReference type="EMBL" id="AK317564">
    <property type="protein sequence ID" value="BAH20228.1"/>
    <property type="molecule type" value="mRNA"/>
</dbReference>
<dbReference type="PIR" id="E96840">
    <property type="entry name" value="E96840"/>
</dbReference>
<dbReference type="RefSeq" id="NP_001321040.1">
    <property type="nucleotide sequence ID" value="NM_001335009.1"/>
</dbReference>
<dbReference type="RefSeq" id="NP_178194.1">
    <property type="nucleotide sequence ID" value="NM_106727.4"/>
</dbReference>
<dbReference type="SMR" id="Q9SAI1"/>
<dbReference type="FunCoup" id="Q9SAI1">
    <property type="interactions" value="457"/>
</dbReference>
<dbReference type="STRING" id="3702.Q9SAI1"/>
<dbReference type="iPTMnet" id="Q9SAI1"/>
<dbReference type="PaxDb" id="3702-AT1G80790.1"/>
<dbReference type="ProteomicsDB" id="230619"/>
<dbReference type="EnsemblPlants" id="AT1G80790.1">
    <property type="protein sequence ID" value="AT1G80790.1"/>
    <property type="gene ID" value="AT1G80790"/>
</dbReference>
<dbReference type="EnsemblPlants" id="AT1G80790.2">
    <property type="protein sequence ID" value="AT1G80790.2"/>
    <property type="gene ID" value="AT1G80790"/>
</dbReference>
<dbReference type="GeneID" id="844418"/>
<dbReference type="Gramene" id="AT1G80790.1">
    <property type="protein sequence ID" value="AT1G80790.1"/>
    <property type="gene ID" value="AT1G80790"/>
</dbReference>
<dbReference type="Gramene" id="AT1G80790.2">
    <property type="protein sequence ID" value="AT1G80790.2"/>
    <property type="gene ID" value="AT1G80790"/>
</dbReference>
<dbReference type="KEGG" id="ath:AT1G80790"/>
<dbReference type="Araport" id="AT1G80790"/>
<dbReference type="TAIR" id="AT1G80790">
    <property type="gene designation" value="FDM5"/>
</dbReference>
<dbReference type="eggNOG" id="ENOG502QRE8">
    <property type="taxonomic scope" value="Eukaryota"/>
</dbReference>
<dbReference type="HOGENOM" id="CLU_021775_1_1_1"/>
<dbReference type="InParanoid" id="Q9SAI1"/>
<dbReference type="OMA" id="VNDMYVW"/>
<dbReference type="OrthoDB" id="1892195at2759"/>
<dbReference type="PhylomeDB" id="Q9SAI1"/>
<dbReference type="PRO" id="PR:Q9SAI1"/>
<dbReference type="Proteomes" id="UP000006548">
    <property type="component" value="Chromosome 1"/>
</dbReference>
<dbReference type="ExpressionAtlas" id="Q9SAI1">
    <property type="expression patterns" value="baseline and differential"/>
</dbReference>
<dbReference type="GO" id="GO:0080188">
    <property type="term" value="P:gene silencing by siRNA-directed DNA methylation"/>
    <property type="evidence" value="ECO:0000316"/>
    <property type="project" value="TAIR"/>
</dbReference>
<dbReference type="CDD" id="cd12266">
    <property type="entry name" value="RRM_like_XS"/>
    <property type="match status" value="1"/>
</dbReference>
<dbReference type="Gene3D" id="3.30.70.2890">
    <property type="entry name" value="XS domain"/>
    <property type="match status" value="1"/>
</dbReference>
<dbReference type="InterPro" id="IPR045177">
    <property type="entry name" value="FDM1-5/IDN2"/>
</dbReference>
<dbReference type="InterPro" id="IPR005379">
    <property type="entry name" value="FDM1-5/IDN2_XH"/>
</dbReference>
<dbReference type="InterPro" id="IPR005380">
    <property type="entry name" value="XS_domain"/>
</dbReference>
<dbReference type="InterPro" id="IPR038588">
    <property type="entry name" value="XS_domain_sf"/>
</dbReference>
<dbReference type="InterPro" id="IPR005381">
    <property type="entry name" value="Znf-XS_domain"/>
</dbReference>
<dbReference type="PANTHER" id="PTHR21596:SF53">
    <property type="entry name" value="FACTOR OF DNA METHYLATION 5-RELATED"/>
    <property type="match status" value="1"/>
</dbReference>
<dbReference type="PANTHER" id="PTHR21596">
    <property type="entry name" value="RIBONUCLEASE P SUBUNIT P38"/>
    <property type="match status" value="1"/>
</dbReference>
<dbReference type="Pfam" id="PF03469">
    <property type="entry name" value="XH"/>
    <property type="match status" value="1"/>
</dbReference>
<dbReference type="Pfam" id="PF03468">
    <property type="entry name" value="XS"/>
    <property type="match status" value="1"/>
</dbReference>
<dbReference type="Pfam" id="PF03470">
    <property type="entry name" value="zf-XS"/>
    <property type="match status" value="1"/>
</dbReference>
<proteinExistence type="evidence at transcript level"/>
<evidence type="ECO:0000255" key="1"/>
<evidence type="ECO:0000269" key="2">
    <source>
    </source>
</evidence>
<evidence type="ECO:0000303" key="3">
    <source>
    </source>
</evidence>
<evidence type="ECO:0000312" key="4">
    <source>
        <dbReference type="Araport" id="AT1G80790"/>
    </source>
</evidence>
<evidence type="ECO:0000312" key="5">
    <source>
        <dbReference type="EMBL" id="AAF14667.1"/>
    </source>
</evidence>
<keyword id="KW-0175">Coiled coil</keyword>
<keyword id="KW-1185">Reference proteome</keyword>
<keyword id="KW-0943">RNA-mediated gene silencing</keyword>
<reference key="1">
    <citation type="journal article" date="2000" name="Nature">
        <title>Sequence and analysis of chromosome 1 of the plant Arabidopsis thaliana.</title>
        <authorList>
            <person name="Theologis A."/>
            <person name="Ecker J.R."/>
            <person name="Palm C.J."/>
            <person name="Federspiel N.A."/>
            <person name="Kaul S."/>
            <person name="White O."/>
            <person name="Alonso J."/>
            <person name="Altafi H."/>
            <person name="Araujo R."/>
            <person name="Bowman C.L."/>
            <person name="Brooks S.Y."/>
            <person name="Buehler E."/>
            <person name="Chan A."/>
            <person name="Chao Q."/>
            <person name="Chen H."/>
            <person name="Cheuk R.F."/>
            <person name="Chin C.W."/>
            <person name="Chung M.K."/>
            <person name="Conn L."/>
            <person name="Conway A.B."/>
            <person name="Conway A.R."/>
            <person name="Creasy T.H."/>
            <person name="Dewar K."/>
            <person name="Dunn P."/>
            <person name="Etgu P."/>
            <person name="Feldblyum T.V."/>
            <person name="Feng J.-D."/>
            <person name="Fong B."/>
            <person name="Fujii C.Y."/>
            <person name="Gill J.E."/>
            <person name="Goldsmith A.D."/>
            <person name="Haas B."/>
            <person name="Hansen N.F."/>
            <person name="Hughes B."/>
            <person name="Huizar L."/>
            <person name="Hunter J.L."/>
            <person name="Jenkins J."/>
            <person name="Johnson-Hopson C."/>
            <person name="Khan S."/>
            <person name="Khaykin E."/>
            <person name="Kim C.J."/>
            <person name="Koo H.L."/>
            <person name="Kremenetskaia I."/>
            <person name="Kurtz D.B."/>
            <person name="Kwan A."/>
            <person name="Lam B."/>
            <person name="Langin-Hooper S."/>
            <person name="Lee A."/>
            <person name="Lee J.M."/>
            <person name="Lenz C.A."/>
            <person name="Li J.H."/>
            <person name="Li Y.-P."/>
            <person name="Lin X."/>
            <person name="Liu S.X."/>
            <person name="Liu Z.A."/>
            <person name="Luros J.S."/>
            <person name="Maiti R."/>
            <person name="Marziali A."/>
            <person name="Militscher J."/>
            <person name="Miranda M."/>
            <person name="Nguyen M."/>
            <person name="Nierman W.C."/>
            <person name="Osborne B.I."/>
            <person name="Pai G."/>
            <person name="Peterson J."/>
            <person name="Pham P.K."/>
            <person name="Rizzo M."/>
            <person name="Rooney T."/>
            <person name="Rowley D."/>
            <person name="Sakano H."/>
            <person name="Salzberg S.L."/>
            <person name="Schwartz J.R."/>
            <person name="Shinn P."/>
            <person name="Southwick A.M."/>
            <person name="Sun H."/>
            <person name="Tallon L.J."/>
            <person name="Tambunga G."/>
            <person name="Toriumi M.J."/>
            <person name="Town C.D."/>
            <person name="Utterback T."/>
            <person name="Van Aken S."/>
            <person name="Vaysberg M."/>
            <person name="Vysotskaia V.S."/>
            <person name="Walker M."/>
            <person name="Wu D."/>
            <person name="Yu G."/>
            <person name="Fraser C.M."/>
            <person name="Venter J.C."/>
            <person name="Davis R.W."/>
        </authorList>
    </citation>
    <scope>NUCLEOTIDE SEQUENCE [LARGE SCALE GENOMIC DNA]</scope>
    <source>
        <strain>cv. Columbia</strain>
    </source>
</reference>
<reference key="2">
    <citation type="journal article" date="2017" name="Plant J.">
        <title>Araport11: a complete reannotation of the Arabidopsis thaliana reference genome.</title>
        <authorList>
            <person name="Cheng C.Y."/>
            <person name="Krishnakumar V."/>
            <person name="Chan A.P."/>
            <person name="Thibaud-Nissen F."/>
            <person name="Schobel S."/>
            <person name="Town C.D."/>
        </authorList>
    </citation>
    <scope>GENOME REANNOTATION</scope>
    <source>
        <strain>cv. Columbia</strain>
    </source>
</reference>
<reference key="3">
    <citation type="submission" date="2006-07" db="EMBL/GenBank/DDBJ databases">
        <title>Large-scale analysis of RIKEN Arabidopsis full-length (RAFL) cDNAs.</title>
        <authorList>
            <person name="Totoki Y."/>
            <person name="Seki M."/>
            <person name="Ishida J."/>
            <person name="Nakajima M."/>
            <person name="Enju A."/>
            <person name="Kamiya A."/>
            <person name="Narusaka M."/>
            <person name="Shin-i T."/>
            <person name="Nakagawa M."/>
            <person name="Sakamoto N."/>
            <person name="Oishi K."/>
            <person name="Kohara Y."/>
            <person name="Kobayashi M."/>
            <person name="Toyoda A."/>
            <person name="Sakaki Y."/>
            <person name="Sakurai T."/>
            <person name="Iida K."/>
            <person name="Akiyama K."/>
            <person name="Satou M."/>
            <person name="Toyoda T."/>
            <person name="Konagaya A."/>
            <person name="Carninci P."/>
            <person name="Kawai J."/>
            <person name="Hayashizaki Y."/>
            <person name="Shinozaki K."/>
        </authorList>
    </citation>
    <scope>NUCLEOTIDE SEQUENCE [LARGE SCALE MRNA] OF 1-439</scope>
    <source>
        <strain>cv. Columbia</strain>
    </source>
</reference>
<reference key="4">
    <citation type="journal article" date="2009" name="DNA Res.">
        <title>Analysis of multiple occurrences of alternative splicing events in Arabidopsis thaliana using novel sequenced full-length cDNAs.</title>
        <authorList>
            <person name="Iida K."/>
            <person name="Fukami-Kobayashi K."/>
            <person name="Toyoda A."/>
            <person name="Sakaki Y."/>
            <person name="Kobayashi M."/>
            <person name="Seki M."/>
            <person name="Shinozaki K."/>
        </authorList>
    </citation>
    <scope>NUCLEOTIDE SEQUENCE [LARGE SCALE MRNA] OF 83-634</scope>
    <source>
        <strain>cv. Columbia</strain>
    </source>
</reference>
<reference key="5">
    <citation type="journal article" date="2012" name="Nucleic Acids Res.">
        <title>A subgroup of SGS3-like proteins act redundantly in RNA-directed DNA methylation.</title>
        <authorList>
            <person name="Xie M."/>
            <person name="Ren G."/>
            <person name="Costa-Nunes P."/>
            <person name="Pontes O."/>
            <person name="Yu B."/>
        </authorList>
    </citation>
    <scope>FUNCTION</scope>
</reference>
<accession>Q9SAI1</accession>
<accession>B9DHL1</accession>
<accession>Q0WUU8</accession>
<name>FDM5_ARATH</name>